<keyword id="KW-0963">Cytoplasm</keyword>
<keyword id="KW-0690">Ribosome biogenesis</keyword>
<evidence type="ECO:0000255" key="1">
    <source>
        <dbReference type="HAMAP-Rule" id="MF_01077"/>
    </source>
</evidence>
<feature type="chain" id="PRO_1000064731" description="Ribosome maturation factor RimP">
    <location>
        <begin position="1"/>
        <end position="155"/>
    </location>
</feature>
<protein>
    <recommendedName>
        <fullName evidence="1">Ribosome maturation factor RimP</fullName>
    </recommendedName>
</protein>
<name>RIMP_LISW6</name>
<accession>A0AIC2</accession>
<proteinExistence type="inferred from homology"/>
<organism>
    <name type="scientific">Listeria welshimeri serovar 6b (strain ATCC 35897 / DSM 20650 / CCUG 15529 / CIP 8149 / NCTC 11857 / SLCC 5334 / V8)</name>
    <dbReference type="NCBI Taxonomy" id="386043"/>
    <lineage>
        <taxon>Bacteria</taxon>
        <taxon>Bacillati</taxon>
        <taxon>Bacillota</taxon>
        <taxon>Bacilli</taxon>
        <taxon>Bacillales</taxon>
        <taxon>Listeriaceae</taxon>
        <taxon>Listeria</taxon>
    </lineage>
</organism>
<dbReference type="EMBL" id="AM263198">
    <property type="protein sequence ID" value="CAK20754.1"/>
    <property type="molecule type" value="Genomic_DNA"/>
</dbReference>
<dbReference type="RefSeq" id="WP_011702139.1">
    <property type="nucleotide sequence ID" value="NC_008555.1"/>
</dbReference>
<dbReference type="SMR" id="A0AIC2"/>
<dbReference type="STRING" id="386043.lwe1336"/>
<dbReference type="GeneID" id="61189213"/>
<dbReference type="KEGG" id="lwe:lwe1336"/>
<dbReference type="eggNOG" id="COG0779">
    <property type="taxonomic scope" value="Bacteria"/>
</dbReference>
<dbReference type="HOGENOM" id="CLU_070525_2_0_9"/>
<dbReference type="OrthoDB" id="9805006at2"/>
<dbReference type="Proteomes" id="UP000000779">
    <property type="component" value="Chromosome"/>
</dbReference>
<dbReference type="GO" id="GO:0005829">
    <property type="term" value="C:cytosol"/>
    <property type="evidence" value="ECO:0007669"/>
    <property type="project" value="TreeGrafter"/>
</dbReference>
<dbReference type="GO" id="GO:0000028">
    <property type="term" value="P:ribosomal small subunit assembly"/>
    <property type="evidence" value="ECO:0007669"/>
    <property type="project" value="TreeGrafter"/>
</dbReference>
<dbReference type="GO" id="GO:0006412">
    <property type="term" value="P:translation"/>
    <property type="evidence" value="ECO:0007669"/>
    <property type="project" value="TreeGrafter"/>
</dbReference>
<dbReference type="CDD" id="cd01734">
    <property type="entry name" value="YlxS_C"/>
    <property type="match status" value="1"/>
</dbReference>
<dbReference type="FunFam" id="2.30.30.180:FF:000002">
    <property type="entry name" value="Ribosome maturation factor RimP"/>
    <property type="match status" value="1"/>
</dbReference>
<dbReference type="FunFam" id="3.30.300.70:FF:000001">
    <property type="entry name" value="Ribosome maturation factor RimP"/>
    <property type="match status" value="1"/>
</dbReference>
<dbReference type="Gene3D" id="2.30.30.180">
    <property type="entry name" value="Ribosome maturation factor RimP, C-terminal domain"/>
    <property type="match status" value="1"/>
</dbReference>
<dbReference type="Gene3D" id="3.30.300.70">
    <property type="entry name" value="RimP-like superfamily, N-terminal"/>
    <property type="match status" value="1"/>
</dbReference>
<dbReference type="HAMAP" id="MF_01077">
    <property type="entry name" value="RimP"/>
    <property type="match status" value="1"/>
</dbReference>
<dbReference type="InterPro" id="IPR003728">
    <property type="entry name" value="Ribosome_maturation_RimP"/>
</dbReference>
<dbReference type="InterPro" id="IPR028998">
    <property type="entry name" value="RimP_C"/>
</dbReference>
<dbReference type="InterPro" id="IPR036847">
    <property type="entry name" value="RimP_C_sf"/>
</dbReference>
<dbReference type="InterPro" id="IPR028989">
    <property type="entry name" value="RimP_N"/>
</dbReference>
<dbReference type="InterPro" id="IPR035956">
    <property type="entry name" value="RimP_N_sf"/>
</dbReference>
<dbReference type="NCBIfam" id="NF000928">
    <property type="entry name" value="PRK00092.1-2"/>
    <property type="match status" value="1"/>
</dbReference>
<dbReference type="PANTHER" id="PTHR33867">
    <property type="entry name" value="RIBOSOME MATURATION FACTOR RIMP"/>
    <property type="match status" value="1"/>
</dbReference>
<dbReference type="PANTHER" id="PTHR33867:SF1">
    <property type="entry name" value="RIBOSOME MATURATION FACTOR RIMP"/>
    <property type="match status" value="1"/>
</dbReference>
<dbReference type="Pfam" id="PF17384">
    <property type="entry name" value="DUF150_C"/>
    <property type="match status" value="1"/>
</dbReference>
<dbReference type="Pfam" id="PF02576">
    <property type="entry name" value="RimP_N"/>
    <property type="match status" value="1"/>
</dbReference>
<dbReference type="SUPFAM" id="SSF74942">
    <property type="entry name" value="YhbC-like, C-terminal domain"/>
    <property type="match status" value="1"/>
</dbReference>
<dbReference type="SUPFAM" id="SSF75420">
    <property type="entry name" value="YhbC-like, N-terminal domain"/>
    <property type="match status" value="1"/>
</dbReference>
<comment type="function">
    <text evidence="1">Required for maturation of 30S ribosomal subunits.</text>
</comment>
<comment type="subcellular location">
    <subcellularLocation>
        <location evidence="1">Cytoplasm</location>
    </subcellularLocation>
</comment>
<comment type="similarity">
    <text evidence="1">Belongs to the RimP family.</text>
</comment>
<sequence>MSKVLEQVEAIVEPITNELQLELVDIAFEKEGPNWFLRIFIDKDGGVDIDECAAVSEKVSEKMDESDPITQNYFLEVSSPGAERPLKKEQDFENAVSKYVHVTSYEPIDGRKMWEGTLVSYDGTTLVITITDKTRKITCEIPKDKVAKARLAIQF</sequence>
<gene>
    <name evidence="1" type="primary">rimP</name>
    <name type="ordered locus">lwe1336</name>
</gene>
<reference key="1">
    <citation type="journal article" date="2006" name="J. Bacteriol.">
        <title>Whole-genome sequence of Listeria welshimeri reveals common steps in genome reduction with Listeria innocua as compared to Listeria monocytogenes.</title>
        <authorList>
            <person name="Hain T."/>
            <person name="Steinweg C."/>
            <person name="Kuenne C.T."/>
            <person name="Billion A."/>
            <person name="Ghai R."/>
            <person name="Chatterjee S.S."/>
            <person name="Domann E."/>
            <person name="Kaerst U."/>
            <person name="Goesmann A."/>
            <person name="Bekel T."/>
            <person name="Bartels D."/>
            <person name="Kaiser O."/>
            <person name="Meyer F."/>
            <person name="Puehler A."/>
            <person name="Weisshaar B."/>
            <person name="Wehland J."/>
            <person name="Liang C."/>
            <person name="Dandekar T."/>
            <person name="Lampidis R."/>
            <person name="Kreft J."/>
            <person name="Goebel W."/>
            <person name="Chakraborty T."/>
        </authorList>
    </citation>
    <scope>NUCLEOTIDE SEQUENCE [LARGE SCALE GENOMIC DNA]</scope>
    <source>
        <strain>ATCC 35897 / DSM 20650 / CCUG 15529 / CIP 8149 / NCTC 11857 / SLCC 5334 / V8</strain>
    </source>
</reference>